<sequence length="394" mass="43104">MAKEKFDRSKEHANIGTIGHVDHGKTTLTAAIATVLAKNGDSVAQSYDMIDNAPEEKERGITINTSHIEYQTDKRHYAHVDCPGHADYVKNMITGAAQMDGGILVVSAADGPMPQTREHILLSRNVGVPALVVFLNKVDMVDDEELLELVEMEVRDLLSEYDFPGDDVPVIAGSALKALEGDAQYEEKILELMEAVDTYIPTPERDSDKPFMMPVEDVFSITGRGTVATGRVERGQIKVGEEVEIIGLHDTSKTTVTGVEMFRKLLDYAEAGDNIGALLRGVAREDVQRGQVLAAPGSITPHTEFKAEVYVLSKDEGGRHTPFFSNYRPQFYFRTTDVTGVVHLPEGTEMVMPGDNVEMTVELIAPIAIEDGTRFSIREGGRTVGSGVVTEIIK</sequence>
<name>EFTU_STAAC</name>
<proteinExistence type="inferred from homology"/>
<accession>Q5HIC7</accession>
<organism>
    <name type="scientific">Staphylococcus aureus (strain COL)</name>
    <dbReference type="NCBI Taxonomy" id="93062"/>
    <lineage>
        <taxon>Bacteria</taxon>
        <taxon>Bacillati</taxon>
        <taxon>Bacillota</taxon>
        <taxon>Bacilli</taxon>
        <taxon>Bacillales</taxon>
        <taxon>Staphylococcaceae</taxon>
        <taxon>Staphylococcus</taxon>
    </lineage>
</organism>
<feature type="chain" id="PRO_0000091389" description="Elongation factor Tu">
    <location>
        <begin position="1"/>
        <end position="394"/>
    </location>
</feature>
<feature type="domain" description="tr-type G">
    <location>
        <begin position="10"/>
        <end position="204"/>
    </location>
</feature>
<feature type="region of interest" description="G1" evidence="1">
    <location>
        <begin position="19"/>
        <end position="26"/>
    </location>
</feature>
<feature type="region of interest" description="G2" evidence="1">
    <location>
        <begin position="60"/>
        <end position="64"/>
    </location>
</feature>
<feature type="region of interest" description="G3" evidence="1">
    <location>
        <begin position="81"/>
        <end position="84"/>
    </location>
</feature>
<feature type="region of interest" description="G4" evidence="1">
    <location>
        <begin position="136"/>
        <end position="139"/>
    </location>
</feature>
<feature type="region of interest" description="G5" evidence="1">
    <location>
        <begin position="174"/>
        <end position="176"/>
    </location>
</feature>
<feature type="binding site" evidence="2">
    <location>
        <begin position="19"/>
        <end position="26"/>
    </location>
    <ligand>
        <name>GTP</name>
        <dbReference type="ChEBI" id="CHEBI:37565"/>
    </ligand>
</feature>
<feature type="binding site" evidence="2">
    <location>
        <position position="26"/>
    </location>
    <ligand>
        <name>Mg(2+)</name>
        <dbReference type="ChEBI" id="CHEBI:18420"/>
    </ligand>
</feature>
<feature type="binding site" evidence="2">
    <location>
        <begin position="81"/>
        <end position="85"/>
    </location>
    <ligand>
        <name>GTP</name>
        <dbReference type="ChEBI" id="CHEBI:37565"/>
    </ligand>
</feature>
<feature type="binding site" evidence="2">
    <location>
        <begin position="136"/>
        <end position="139"/>
    </location>
    <ligand>
        <name>GTP</name>
        <dbReference type="ChEBI" id="CHEBI:37565"/>
    </ligand>
</feature>
<dbReference type="EC" id="3.6.5.3" evidence="2"/>
<dbReference type="EMBL" id="CP000046">
    <property type="protein sequence ID" value="AAW37704.1"/>
    <property type="molecule type" value="Genomic_DNA"/>
</dbReference>
<dbReference type="RefSeq" id="WP_001040568.1">
    <property type="nucleotide sequence ID" value="NZ_JBGOFO010000009.1"/>
</dbReference>
<dbReference type="SMR" id="Q5HIC7"/>
<dbReference type="KEGG" id="sac:SACOL0594"/>
<dbReference type="HOGENOM" id="CLU_007265_0_0_9"/>
<dbReference type="Proteomes" id="UP000000530">
    <property type="component" value="Chromosome"/>
</dbReference>
<dbReference type="GO" id="GO:0005829">
    <property type="term" value="C:cytosol"/>
    <property type="evidence" value="ECO:0007669"/>
    <property type="project" value="TreeGrafter"/>
</dbReference>
<dbReference type="GO" id="GO:0005525">
    <property type="term" value="F:GTP binding"/>
    <property type="evidence" value="ECO:0007669"/>
    <property type="project" value="UniProtKB-UniRule"/>
</dbReference>
<dbReference type="GO" id="GO:0003924">
    <property type="term" value="F:GTPase activity"/>
    <property type="evidence" value="ECO:0007669"/>
    <property type="project" value="InterPro"/>
</dbReference>
<dbReference type="GO" id="GO:0003746">
    <property type="term" value="F:translation elongation factor activity"/>
    <property type="evidence" value="ECO:0007669"/>
    <property type="project" value="UniProtKB-UniRule"/>
</dbReference>
<dbReference type="CDD" id="cd01884">
    <property type="entry name" value="EF_Tu"/>
    <property type="match status" value="1"/>
</dbReference>
<dbReference type="CDD" id="cd03697">
    <property type="entry name" value="EFTU_II"/>
    <property type="match status" value="1"/>
</dbReference>
<dbReference type="CDD" id="cd03707">
    <property type="entry name" value="EFTU_III"/>
    <property type="match status" value="1"/>
</dbReference>
<dbReference type="FunFam" id="2.40.30.10:FF:000001">
    <property type="entry name" value="Elongation factor Tu"/>
    <property type="match status" value="1"/>
</dbReference>
<dbReference type="FunFam" id="3.40.50.300:FF:000003">
    <property type="entry name" value="Elongation factor Tu"/>
    <property type="match status" value="1"/>
</dbReference>
<dbReference type="Gene3D" id="3.40.50.300">
    <property type="entry name" value="P-loop containing nucleotide triphosphate hydrolases"/>
    <property type="match status" value="1"/>
</dbReference>
<dbReference type="Gene3D" id="2.40.30.10">
    <property type="entry name" value="Translation factors"/>
    <property type="match status" value="2"/>
</dbReference>
<dbReference type="HAMAP" id="MF_00118_B">
    <property type="entry name" value="EF_Tu_B"/>
    <property type="match status" value="1"/>
</dbReference>
<dbReference type="InterPro" id="IPR041709">
    <property type="entry name" value="EF-Tu_GTP-bd"/>
</dbReference>
<dbReference type="InterPro" id="IPR050055">
    <property type="entry name" value="EF-Tu_GTPase"/>
</dbReference>
<dbReference type="InterPro" id="IPR004161">
    <property type="entry name" value="EFTu-like_2"/>
</dbReference>
<dbReference type="InterPro" id="IPR033720">
    <property type="entry name" value="EFTU_2"/>
</dbReference>
<dbReference type="InterPro" id="IPR031157">
    <property type="entry name" value="G_TR_CS"/>
</dbReference>
<dbReference type="InterPro" id="IPR027417">
    <property type="entry name" value="P-loop_NTPase"/>
</dbReference>
<dbReference type="InterPro" id="IPR005225">
    <property type="entry name" value="Small_GTP-bd"/>
</dbReference>
<dbReference type="InterPro" id="IPR000795">
    <property type="entry name" value="T_Tr_GTP-bd_dom"/>
</dbReference>
<dbReference type="InterPro" id="IPR009000">
    <property type="entry name" value="Transl_B-barrel_sf"/>
</dbReference>
<dbReference type="InterPro" id="IPR009001">
    <property type="entry name" value="Transl_elong_EF1A/Init_IF2_C"/>
</dbReference>
<dbReference type="InterPro" id="IPR004541">
    <property type="entry name" value="Transl_elong_EFTu/EF1A_bac/org"/>
</dbReference>
<dbReference type="InterPro" id="IPR004160">
    <property type="entry name" value="Transl_elong_EFTu/EF1A_C"/>
</dbReference>
<dbReference type="NCBIfam" id="TIGR00485">
    <property type="entry name" value="EF-Tu"/>
    <property type="match status" value="1"/>
</dbReference>
<dbReference type="NCBIfam" id="NF000766">
    <property type="entry name" value="PRK00049.1"/>
    <property type="match status" value="1"/>
</dbReference>
<dbReference type="NCBIfam" id="NF009372">
    <property type="entry name" value="PRK12735.1"/>
    <property type="match status" value="1"/>
</dbReference>
<dbReference type="NCBIfam" id="NF009373">
    <property type="entry name" value="PRK12736.1"/>
    <property type="match status" value="1"/>
</dbReference>
<dbReference type="NCBIfam" id="TIGR00231">
    <property type="entry name" value="small_GTP"/>
    <property type="match status" value="1"/>
</dbReference>
<dbReference type="PANTHER" id="PTHR43721:SF22">
    <property type="entry name" value="ELONGATION FACTOR TU, MITOCHONDRIAL"/>
    <property type="match status" value="1"/>
</dbReference>
<dbReference type="PANTHER" id="PTHR43721">
    <property type="entry name" value="ELONGATION FACTOR TU-RELATED"/>
    <property type="match status" value="1"/>
</dbReference>
<dbReference type="Pfam" id="PF00009">
    <property type="entry name" value="GTP_EFTU"/>
    <property type="match status" value="1"/>
</dbReference>
<dbReference type="Pfam" id="PF03144">
    <property type="entry name" value="GTP_EFTU_D2"/>
    <property type="match status" value="1"/>
</dbReference>
<dbReference type="Pfam" id="PF03143">
    <property type="entry name" value="GTP_EFTU_D3"/>
    <property type="match status" value="1"/>
</dbReference>
<dbReference type="PRINTS" id="PR00315">
    <property type="entry name" value="ELONGATNFCT"/>
</dbReference>
<dbReference type="SUPFAM" id="SSF50465">
    <property type="entry name" value="EF-Tu/eEF-1alpha/eIF2-gamma C-terminal domain"/>
    <property type="match status" value="1"/>
</dbReference>
<dbReference type="SUPFAM" id="SSF52540">
    <property type="entry name" value="P-loop containing nucleoside triphosphate hydrolases"/>
    <property type="match status" value="1"/>
</dbReference>
<dbReference type="SUPFAM" id="SSF50447">
    <property type="entry name" value="Translation proteins"/>
    <property type="match status" value="1"/>
</dbReference>
<dbReference type="PROSITE" id="PS00301">
    <property type="entry name" value="G_TR_1"/>
    <property type="match status" value="1"/>
</dbReference>
<dbReference type="PROSITE" id="PS51722">
    <property type="entry name" value="G_TR_2"/>
    <property type="match status" value="1"/>
</dbReference>
<keyword id="KW-0963">Cytoplasm</keyword>
<keyword id="KW-0251">Elongation factor</keyword>
<keyword id="KW-0342">GTP-binding</keyword>
<keyword id="KW-0378">Hydrolase</keyword>
<keyword id="KW-0460">Magnesium</keyword>
<keyword id="KW-0479">Metal-binding</keyword>
<keyword id="KW-0547">Nucleotide-binding</keyword>
<keyword id="KW-0648">Protein biosynthesis</keyword>
<evidence type="ECO:0000250" key="1"/>
<evidence type="ECO:0000255" key="2">
    <source>
        <dbReference type="HAMAP-Rule" id="MF_00118"/>
    </source>
</evidence>
<comment type="function">
    <text evidence="2">GTP hydrolase that promotes the GTP-dependent binding of aminoacyl-tRNA to the A-site of ribosomes during protein biosynthesis.</text>
</comment>
<comment type="catalytic activity">
    <reaction evidence="2">
        <text>GTP + H2O = GDP + phosphate + H(+)</text>
        <dbReference type="Rhea" id="RHEA:19669"/>
        <dbReference type="ChEBI" id="CHEBI:15377"/>
        <dbReference type="ChEBI" id="CHEBI:15378"/>
        <dbReference type="ChEBI" id="CHEBI:37565"/>
        <dbReference type="ChEBI" id="CHEBI:43474"/>
        <dbReference type="ChEBI" id="CHEBI:58189"/>
        <dbReference type="EC" id="3.6.5.3"/>
    </reaction>
    <physiologicalReaction direction="left-to-right" evidence="2">
        <dbReference type="Rhea" id="RHEA:19670"/>
    </physiologicalReaction>
</comment>
<comment type="subunit">
    <text evidence="2">Monomer.</text>
</comment>
<comment type="subcellular location">
    <subcellularLocation>
        <location evidence="2">Cytoplasm</location>
    </subcellularLocation>
</comment>
<comment type="similarity">
    <text evidence="2">Belongs to the TRAFAC class translation factor GTPase superfamily. Classic translation factor GTPase family. EF-Tu/EF-1A subfamily.</text>
</comment>
<gene>
    <name evidence="2" type="primary">tuf</name>
    <name type="ordered locus">SACOL0594</name>
</gene>
<protein>
    <recommendedName>
        <fullName evidence="2">Elongation factor Tu</fullName>
        <shortName evidence="2">EF-Tu</shortName>
        <ecNumber evidence="2">3.6.5.3</ecNumber>
    </recommendedName>
</protein>
<reference key="1">
    <citation type="journal article" date="2005" name="J. Bacteriol.">
        <title>Insights on evolution of virulence and resistance from the complete genome analysis of an early methicillin-resistant Staphylococcus aureus strain and a biofilm-producing methicillin-resistant Staphylococcus epidermidis strain.</title>
        <authorList>
            <person name="Gill S.R."/>
            <person name="Fouts D.E."/>
            <person name="Archer G.L."/>
            <person name="Mongodin E.F."/>
            <person name="DeBoy R.T."/>
            <person name="Ravel J."/>
            <person name="Paulsen I.T."/>
            <person name="Kolonay J.F."/>
            <person name="Brinkac L.M."/>
            <person name="Beanan M.J."/>
            <person name="Dodson R.J."/>
            <person name="Daugherty S.C."/>
            <person name="Madupu R."/>
            <person name="Angiuoli S.V."/>
            <person name="Durkin A.S."/>
            <person name="Haft D.H."/>
            <person name="Vamathevan J.J."/>
            <person name="Khouri H."/>
            <person name="Utterback T.R."/>
            <person name="Lee C."/>
            <person name="Dimitrov G."/>
            <person name="Jiang L."/>
            <person name="Qin H."/>
            <person name="Weidman J."/>
            <person name="Tran K."/>
            <person name="Kang K.H."/>
            <person name="Hance I.R."/>
            <person name="Nelson K.E."/>
            <person name="Fraser C.M."/>
        </authorList>
    </citation>
    <scope>NUCLEOTIDE SEQUENCE [LARGE SCALE GENOMIC DNA]</scope>
    <source>
        <strain>COL</strain>
    </source>
</reference>